<evidence type="ECO:0000255" key="1">
    <source>
        <dbReference type="HAMAP-Rule" id="MF_03178"/>
    </source>
</evidence>
<dbReference type="EC" id="1.18.1.-" evidence="1"/>
<dbReference type="EMBL" id="CU329670">
    <property type="protein sequence ID" value="CAB36512.3"/>
    <property type="molecule type" value="Genomic_DNA"/>
</dbReference>
<dbReference type="PIR" id="T37567">
    <property type="entry name" value="T37567"/>
</dbReference>
<dbReference type="RefSeq" id="NP_593046.2">
    <property type="nucleotide sequence ID" value="NM_001018445.2"/>
</dbReference>
<dbReference type="SMR" id="O94613"/>
<dbReference type="FunCoup" id="O94613">
    <property type="interactions" value="601"/>
</dbReference>
<dbReference type="STRING" id="284812.O94613"/>
<dbReference type="iPTMnet" id="O94613"/>
<dbReference type="SwissPalm" id="O94613"/>
<dbReference type="PaxDb" id="4896-SPAC1296.06.1"/>
<dbReference type="EnsemblFungi" id="SPAC1296.06.1">
    <property type="protein sequence ID" value="SPAC1296.06.1:pep"/>
    <property type="gene ID" value="SPAC1296.06"/>
</dbReference>
<dbReference type="GeneID" id="2542966"/>
<dbReference type="KEGG" id="spo:2542966"/>
<dbReference type="PomBase" id="SPAC1296.06">
    <property type="gene designation" value="tah18"/>
</dbReference>
<dbReference type="VEuPathDB" id="FungiDB:SPAC1296.06"/>
<dbReference type="eggNOG" id="KOG1159">
    <property type="taxonomic scope" value="Eukaryota"/>
</dbReference>
<dbReference type="HOGENOM" id="CLU_001570_17_6_1"/>
<dbReference type="InParanoid" id="O94613"/>
<dbReference type="OMA" id="DSIMGLH"/>
<dbReference type="PRO" id="PR:O94613"/>
<dbReference type="Proteomes" id="UP000002485">
    <property type="component" value="Chromosome I"/>
</dbReference>
<dbReference type="GO" id="GO:0005829">
    <property type="term" value="C:cytosol"/>
    <property type="evidence" value="ECO:0000318"/>
    <property type="project" value="GO_Central"/>
</dbReference>
<dbReference type="GO" id="GO:0005739">
    <property type="term" value="C:mitochondrion"/>
    <property type="evidence" value="ECO:0000266"/>
    <property type="project" value="PomBase"/>
</dbReference>
<dbReference type="GO" id="GO:0050660">
    <property type="term" value="F:flavin adenine dinucleotide binding"/>
    <property type="evidence" value="ECO:0000318"/>
    <property type="project" value="GO_Central"/>
</dbReference>
<dbReference type="GO" id="GO:0010181">
    <property type="term" value="F:FMN binding"/>
    <property type="evidence" value="ECO:0000318"/>
    <property type="project" value="GO_Central"/>
</dbReference>
<dbReference type="GO" id="GO:0050661">
    <property type="term" value="F:NADP binding"/>
    <property type="evidence" value="ECO:0000250"/>
    <property type="project" value="PomBase"/>
</dbReference>
<dbReference type="GO" id="GO:0003958">
    <property type="term" value="F:NADPH-hemoprotein reductase activity"/>
    <property type="evidence" value="ECO:0007669"/>
    <property type="project" value="InterPro"/>
</dbReference>
<dbReference type="GO" id="GO:0016491">
    <property type="term" value="F:oxidoreductase activity"/>
    <property type="evidence" value="ECO:0000318"/>
    <property type="project" value="GO_Central"/>
</dbReference>
<dbReference type="GO" id="GO:0044572">
    <property type="term" value="P:[4Fe-4S] cluster assembly"/>
    <property type="evidence" value="ECO:0000266"/>
    <property type="project" value="PomBase"/>
</dbReference>
<dbReference type="FunFam" id="3.40.50.360:FF:000015">
    <property type="entry name" value="NADPH-dependent diflavin oxidoreductase 1"/>
    <property type="match status" value="1"/>
</dbReference>
<dbReference type="FunFam" id="3.40.50.80:FF:000030">
    <property type="entry name" value="NADPH-dependent diflavin oxidoreductase 1"/>
    <property type="match status" value="1"/>
</dbReference>
<dbReference type="Gene3D" id="3.40.50.360">
    <property type="match status" value="1"/>
</dbReference>
<dbReference type="Gene3D" id="1.20.990.10">
    <property type="entry name" value="NADPH-cytochrome p450 Reductase, Chain A, domain 3"/>
    <property type="match status" value="1"/>
</dbReference>
<dbReference type="Gene3D" id="3.40.50.80">
    <property type="entry name" value="Nucleotide-binding domain of ferredoxin-NADP reductase (FNR) module"/>
    <property type="match status" value="1"/>
</dbReference>
<dbReference type="Gene3D" id="2.40.30.10">
    <property type="entry name" value="Translation factors"/>
    <property type="match status" value="1"/>
</dbReference>
<dbReference type="HAMAP" id="MF_03178">
    <property type="entry name" value="NDOR1"/>
    <property type="match status" value="1"/>
</dbReference>
<dbReference type="InterPro" id="IPR003097">
    <property type="entry name" value="CysJ-like_FAD-binding"/>
</dbReference>
<dbReference type="InterPro" id="IPR017927">
    <property type="entry name" value="FAD-bd_FR_type"/>
</dbReference>
<dbReference type="InterPro" id="IPR001094">
    <property type="entry name" value="Flavdoxin-like"/>
</dbReference>
<dbReference type="InterPro" id="IPR008254">
    <property type="entry name" value="Flavodoxin/NO_synth"/>
</dbReference>
<dbReference type="InterPro" id="IPR001709">
    <property type="entry name" value="Flavoprot_Pyr_Nucl_cyt_Rdtase"/>
</dbReference>
<dbReference type="InterPro" id="IPR029039">
    <property type="entry name" value="Flavoprotein-like_sf"/>
</dbReference>
<dbReference type="InterPro" id="IPR039261">
    <property type="entry name" value="FNR_nucleotide-bd"/>
</dbReference>
<dbReference type="InterPro" id="IPR023173">
    <property type="entry name" value="NADPH_Cyt_P450_Rdtase_alpha"/>
</dbReference>
<dbReference type="InterPro" id="IPR028879">
    <property type="entry name" value="NDOR1"/>
</dbReference>
<dbReference type="InterPro" id="IPR001433">
    <property type="entry name" value="OxRdtase_FAD/NAD-bd"/>
</dbReference>
<dbReference type="InterPro" id="IPR017938">
    <property type="entry name" value="Riboflavin_synthase-like_b-brl"/>
</dbReference>
<dbReference type="PANTHER" id="PTHR19384:SF10">
    <property type="entry name" value="NADPH-DEPENDENT DIFLAVIN OXIDOREDUCTASE 1"/>
    <property type="match status" value="1"/>
</dbReference>
<dbReference type="PANTHER" id="PTHR19384">
    <property type="entry name" value="NITRIC OXIDE SYNTHASE-RELATED"/>
    <property type="match status" value="1"/>
</dbReference>
<dbReference type="Pfam" id="PF00667">
    <property type="entry name" value="FAD_binding_1"/>
    <property type="match status" value="1"/>
</dbReference>
<dbReference type="Pfam" id="PF00258">
    <property type="entry name" value="Flavodoxin_1"/>
    <property type="match status" value="1"/>
</dbReference>
<dbReference type="Pfam" id="PF00175">
    <property type="entry name" value="NAD_binding_1"/>
    <property type="match status" value="1"/>
</dbReference>
<dbReference type="PRINTS" id="PR00369">
    <property type="entry name" value="FLAVODOXIN"/>
</dbReference>
<dbReference type="PRINTS" id="PR00371">
    <property type="entry name" value="FPNCR"/>
</dbReference>
<dbReference type="SUPFAM" id="SSF52343">
    <property type="entry name" value="Ferredoxin reductase-like, C-terminal NADP-linked domain"/>
    <property type="match status" value="1"/>
</dbReference>
<dbReference type="SUPFAM" id="SSF52218">
    <property type="entry name" value="Flavoproteins"/>
    <property type="match status" value="1"/>
</dbReference>
<dbReference type="SUPFAM" id="SSF63380">
    <property type="entry name" value="Riboflavin synthase domain-like"/>
    <property type="match status" value="1"/>
</dbReference>
<dbReference type="PROSITE" id="PS51384">
    <property type="entry name" value="FAD_FR"/>
    <property type="match status" value="1"/>
</dbReference>
<dbReference type="PROSITE" id="PS50902">
    <property type="entry name" value="FLAVODOXIN_LIKE"/>
    <property type="match status" value="1"/>
</dbReference>
<comment type="function">
    <text evidence="1">NADPH-dependent reductase which is a central component of the cytosolic iron-sulfur (Fe-S) protein assembly (CIA) machinery. Transfers electrons from NADPH via its FAD and FMN prosthetic groups to the [2Fe-2S] cluster of dre2, another key component of the CIA machinery. In turn, this reduced cluster provides electrons for assembly of cytosolic iron-sulfur cluster proteins. Positively controls H(2)O(2)-induced cell death.</text>
</comment>
<comment type="catalytic activity">
    <reaction evidence="1">
        <text>2 oxidized [2Fe-2S]-[protein] + NADPH = 2 reduced [2Fe-2S]-[protein] + NADP(+) + H(+)</text>
        <dbReference type="Rhea" id="RHEA:67716"/>
        <dbReference type="Rhea" id="RHEA-COMP:17327"/>
        <dbReference type="Rhea" id="RHEA-COMP:17328"/>
        <dbReference type="ChEBI" id="CHEBI:15378"/>
        <dbReference type="ChEBI" id="CHEBI:33737"/>
        <dbReference type="ChEBI" id="CHEBI:33738"/>
        <dbReference type="ChEBI" id="CHEBI:57783"/>
        <dbReference type="ChEBI" id="CHEBI:58349"/>
    </reaction>
    <physiologicalReaction direction="left-to-right" evidence="1">
        <dbReference type="Rhea" id="RHEA:67717"/>
    </physiologicalReaction>
</comment>
<comment type="cofactor">
    <cofactor evidence="1">
        <name>FAD</name>
        <dbReference type="ChEBI" id="CHEBI:57692"/>
    </cofactor>
</comment>
<comment type="cofactor">
    <cofactor evidence="1">
        <name>FMN</name>
        <dbReference type="ChEBI" id="CHEBI:58210"/>
    </cofactor>
</comment>
<comment type="subunit">
    <text evidence="1">Interacts with dre2; as part of the cytosolic iron-sulfur (Fe-S) protein assembly (CIA) machinery.</text>
</comment>
<comment type="subcellular location">
    <subcellularLocation>
        <location evidence="1">Cytoplasm</location>
    </subcellularLocation>
    <subcellularLocation>
        <location evidence="1">Mitochondrion</location>
    </subcellularLocation>
    <text evidence="1">Relocalizes to mitochondria after H(2)O(2) exposure.</text>
</comment>
<comment type="similarity">
    <text evidence="1">Belongs to the NADPH-dependent diflavin oxidoreductase NDOR1 family.</text>
</comment>
<comment type="similarity">
    <text evidence="1">In the N-terminal section; belongs to the flavodoxin family.</text>
</comment>
<comment type="similarity">
    <text evidence="1">In the C-terminal section; belongs to the flavoprotein pyridine nucleotide cytochrome reductase family.</text>
</comment>
<gene>
    <name evidence="1" type="primary">tah18</name>
    <name type="ORF">SPAC1296.06</name>
</gene>
<feature type="chain" id="PRO_0000167621" description="NADPH-dependent diflavin oxidoreductase 1">
    <location>
        <begin position="1"/>
        <end position="584"/>
    </location>
</feature>
<feature type="domain" description="Flavodoxin-like" evidence="1">
    <location>
        <begin position="6"/>
        <end position="150"/>
    </location>
</feature>
<feature type="domain" description="FAD-binding FR-type" evidence="1">
    <location>
        <begin position="199"/>
        <end position="436"/>
    </location>
</feature>
<feature type="binding site" evidence="1">
    <location>
        <begin position="12"/>
        <end position="17"/>
    </location>
    <ligand>
        <name>FMN</name>
        <dbReference type="ChEBI" id="CHEBI:58210"/>
    </ligand>
</feature>
<feature type="binding site" evidence="1">
    <location>
        <begin position="59"/>
        <end position="62"/>
    </location>
    <ligand>
        <name>FMN</name>
        <dbReference type="ChEBI" id="CHEBI:58210"/>
    </ligand>
</feature>
<feature type="binding site" evidence="1">
    <location>
        <begin position="97"/>
        <end position="106"/>
    </location>
    <ligand>
        <name>FMN</name>
        <dbReference type="ChEBI" id="CHEBI:58210"/>
    </ligand>
</feature>
<feature type="binding site" evidence="1">
    <location>
        <position position="132"/>
    </location>
    <ligand>
        <name>FMN</name>
        <dbReference type="ChEBI" id="CHEBI:58210"/>
    </ligand>
</feature>
<feature type="binding site" evidence="1">
    <location>
        <position position="343"/>
    </location>
    <ligand>
        <name>FAD</name>
        <dbReference type="ChEBI" id="CHEBI:57692"/>
    </ligand>
</feature>
<feature type="binding site" evidence="1">
    <location>
        <begin position="373"/>
        <end position="376"/>
    </location>
    <ligand>
        <name>FAD</name>
        <dbReference type="ChEBI" id="CHEBI:57692"/>
    </ligand>
</feature>
<feature type="binding site" evidence="1">
    <location>
        <begin position="407"/>
        <end position="410"/>
    </location>
    <ligand>
        <name>FAD</name>
        <dbReference type="ChEBI" id="CHEBI:57692"/>
    </ligand>
</feature>
<feature type="binding site" evidence="1">
    <location>
        <position position="448"/>
    </location>
    <ligand>
        <name>NADP(+)</name>
        <dbReference type="ChEBI" id="CHEBI:58349"/>
    </ligand>
</feature>
<feature type="binding site" evidence="1">
    <location>
        <begin position="503"/>
        <end position="504"/>
    </location>
    <ligand>
        <name>NADP(+)</name>
        <dbReference type="ChEBI" id="CHEBI:58349"/>
    </ligand>
</feature>
<feature type="binding site" evidence="1">
    <location>
        <begin position="509"/>
        <end position="513"/>
    </location>
    <ligand>
        <name>NADP(+)</name>
        <dbReference type="ChEBI" id="CHEBI:58349"/>
    </ligand>
</feature>
<feature type="binding site" evidence="1">
    <location>
        <position position="584"/>
    </location>
    <ligand>
        <name>FAD</name>
        <dbReference type="ChEBI" id="CHEBI:57692"/>
    </ligand>
</feature>
<accession>O94613</accession>
<keyword id="KW-0963">Cytoplasm</keyword>
<keyword id="KW-0274">FAD</keyword>
<keyword id="KW-0285">Flavoprotein</keyword>
<keyword id="KW-0288">FMN</keyword>
<keyword id="KW-0496">Mitochondrion</keyword>
<keyword id="KW-0521">NADP</keyword>
<keyword id="KW-0560">Oxidoreductase</keyword>
<keyword id="KW-1185">Reference proteome</keyword>
<name>NDOR1_SCHPO</name>
<sequence>MKNSHIYILYGSETGTAEGLAESLFRSLTRMGYDVLVNSMDDFNLENLLRPLQCVFICSTTGQGEMPLNMRKFWRFLLRKKLPNTFLNDMQYAVFGCGDTSYTRFNWASKKLDSRLRQLGAQSFSSRGEGDEQHPDGVEGVFAYWCNHLYSQLAAIKTPSRPAFGEFDLLPPSFQIIIDESLGCKVKGFEDNNIVRHSRGKIEATLVHNKRISNIKHWQDVRHLAFKIPNFERWKPGDVAVLYPWNDDMSVNSFIECMGWESIKYSPLIISSNVAERKLPWFPNILNVFNLVKYVLSIHSVPSRTFFEMASHFSNNKMHKERLQEFSSYKNIDDYYDYTTRPRRTVLETLQEFKSVQIPIEYALDAFPVIRGRQYSIANRCDNSTGILELAVALVKYQTILKSPRQGICSRWICDLHENTSFNIDILPGFLNLSYQSNKPLIMVGPGTGVAPLRALIQERIYNGLKENLLFFGCRNKSMDFLFEKDWEKYTEEGTLKLFCAFSRDQEKKKYVQHSIQENGELVYNLLNEKDGMFFVSGSSGKMPSSVKDAIAGIVSKYSGCSISDGYSFVTSLEKKNRYYQETW</sequence>
<protein>
    <recommendedName>
        <fullName evidence="1">NADPH-dependent diflavin oxidoreductase 1</fullName>
        <ecNumber evidence="1">1.18.1.-</ecNumber>
    </recommendedName>
    <alternativeName>
        <fullName evidence="1">NADPH-dependent FMN and FAD-containing oxidoreductase</fullName>
    </alternativeName>
</protein>
<organism>
    <name type="scientific">Schizosaccharomyces pombe (strain 972 / ATCC 24843)</name>
    <name type="common">Fission yeast</name>
    <dbReference type="NCBI Taxonomy" id="284812"/>
    <lineage>
        <taxon>Eukaryota</taxon>
        <taxon>Fungi</taxon>
        <taxon>Dikarya</taxon>
        <taxon>Ascomycota</taxon>
        <taxon>Taphrinomycotina</taxon>
        <taxon>Schizosaccharomycetes</taxon>
        <taxon>Schizosaccharomycetales</taxon>
        <taxon>Schizosaccharomycetaceae</taxon>
        <taxon>Schizosaccharomyces</taxon>
    </lineage>
</organism>
<reference key="1">
    <citation type="journal article" date="2002" name="Nature">
        <title>The genome sequence of Schizosaccharomyces pombe.</title>
        <authorList>
            <person name="Wood V."/>
            <person name="Gwilliam R."/>
            <person name="Rajandream M.A."/>
            <person name="Lyne M.H."/>
            <person name="Lyne R."/>
            <person name="Stewart A."/>
            <person name="Sgouros J.G."/>
            <person name="Peat N."/>
            <person name="Hayles J."/>
            <person name="Baker S.G."/>
            <person name="Basham D."/>
            <person name="Bowman S."/>
            <person name="Brooks K."/>
            <person name="Brown D."/>
            <person name="Brown S."/>
            <person name="Chillingworth T."/>
            <person name="Churcher C.M."/>
            <person name="Collins M."/>
            <person name="Connor R."/>
            <person name="Cronin A."/>
            <person name="Davis P."/>
            <person name="Feltwell T."/>
            <person name="Fraser A."/>
            <person name="Gentles S."/>
            <person name="Goble A."/>
            <person name="Hamlin N."/>
            <person name="Harris D.E."/>
            <person name="Hidalgo J."/>
            <person name="Hodgson G."/>
            <person name="Holroyd S."/>
            <person name="Hornsby T."/>
            <person name="Howarth S."/>
            <person name="Huckle E.J."/>
            <person name="Hunt S."/>
            <person name="Jagels K."/>
            <person name="James K.D."/>
            <person name="Jones L."/>
            <person name="Jones M."/>
            <person name="Leather S."/>
            <person name="McDonald S."/>
            <person name="McLean J."/>
            <person name="Mooney P."/>
            <person name="Moule S."/>
            <person name="Mungall K.L."/>
            <person name="Murphy L.D."/>
            <person name="Niblett D."/>
            <person name="Odell C."/>
            <person name="Oliver K."/>
            <person name="O'Neil S."/>
            <person name="Pearson D."/>
            <person name="Quail M.A."/>
            <person name="Rabbinowitsch E."/>
            <person name="Rutherford K.M."/>
            <person name="Rutter S."/>
            <person name="Saunders D."/>
            <person name="Seeger K."/>
            <person name="Sharp S."/>
            <person name="Skelton J."/>
            <person name="Simmonds M.N."/>
            <person name="Squares R."/>
            <person name="Squares S."/>
            <person name="Stevens K."/>
            <person name="Taylor K."/>
            <person name="Taylor R.G."/>
            <person name="Tivey A."/>
            <person name="Walsh S.V."/>
            <person name="Warren T."/>
            <person name="Whitehead S."/>
            <person name="Woodward J.R."/>
            <person name="Volckaert G."/>
            <person name="Aert R."/>
            <person name="Robben J."/>
            <person name="Grymonprez B."/>
            <person name="Weltjens I."/>
            <person name="Vanstreels E."/>
            <person name="Rieger M."/>
            <person name="Schaefer M."/>
            <person name="Mueller-Auer S."/>
            <person name="Gabel C."/>
            <person name="Fuchs M."/>
            <person name="Duesterhoeft A."/>
            <person name="Fritzc C."/>
            <person name="Holzer E."/>
            <person name="Moestl D."/>
            <person name="Hilbert H."/>
            <person name="Borzym K."/>
            <person name="Langer I."/>
            <person name="Beck A."/>
            <person name="Lehrach H."/>
            <person name="Reinhardt R."/>
            <person name="Pohl T.M."/>
            <person name="Eger P."/>
            <person name="Zimmermann W."/>
            <person name="Wedler H."/>
            <person name="Wambutt R."/>
            <person name="Purnelle B."/>
            <person name="Goffeau A."/>
            <person name="Cadieu E."/>
            <person name="Dreano S."/>
            <person name="Gloux S."/>
            <person name="Lelaure V."/>
            <person name="Mottier S."/>
            <person name="Galibert F."/>
            <person name="Aves S.J."/>
            <person name="Xiang Z."/>
            <person name="Hunt C."/>
            <person name="Moore K."/>
            <person name="Hurst S.M."/>
            <person name="Lucas M."/>
            <person name="Rochet M."/>
            <person name="Gaillardin C."/>
            <person name="Tallada V.A."/>
            <person name="Garzon A."/>
            <person name="Thode G."/>
            <person name="Daga R.R."/>
            <person name="Cruzado L."/>
            <person name="Jimenez J."/>
            <person name="Sanchez M."/>
            <person name="del Rey F."/>
            <person name="Benito J."/>
            <person name="Dominguez A."/>
            <person name="Revuelta J.L."/>
            <person name="Moreno S."/>
            <person name="Armstrong J."/>
            <person name="Forsburg S.L."/>
            <person name="Cerutti L."/>
            <person name="Lowe T."/>
            <person name="McCombie W.R."/>
            <person name="Paulsen I."/>
            <person name="Potashkin J."/>
            <person name="Shpakovski G.V."/>
            <person name="Ussery D."/>
            <person name="Barrell B.G."/>
            <person name="Nurse P."/>
        </authorList>
    </citation>
    <scope>NUCLEOTIDE SEQUENCE [LARGE SCALE GENOMIC DNA]</scope>
    <source>
        <strain>972 / ATCC 24843</strain>
    </source>
</reference>
<reference key="2">
    <citation type="journal article" date="2011" name="Science">
        <title>Comparative functional genomics of the fission yeasts.</title>
        <authorList>
            <person name="Rhind N."/>
            <person name="Chen Z."/>
            <person name="Yassour M."/>
            <person name="Thompson D.A."/>
            <person name="Haas B.J."/>
            <person name="Habib N."/>
            <person name="Wapinski I."/>
            <person name="Roy S."/>
            <person name="Lin M.F."/>
            <person name="Heiman D.I."/>
            <person name="Young S.K."/>
            <person name="Furuya K."/>
            <person name="Guo Y."/>
            <person name="Pidoux A."/>
            <person name="Chen H.M."/>
            <person name="Robbertse B."/>
            <person name="Goldberg J.M."/>
            <person name="Aoki K."/>
            <person name="Bayne E.H."/>
            <person name="Berlin A.M."/>
            <person name="Desjardins C.A."/>
            <person name="Dobbs E."/>
            <person name="Dukaj L."/>
            <person name="Fan L."/>
            <person name="FitzGerald M.G."/>
            <person name="French C."/>
            <person name="Gujja S."/>
            <person name="Hansen K."/>
            <person name="Keifenheim D."/>
            <person name="Levin J.Z."/>
            <person name="Mosher R.A."/>
            <person name="Mueller C.A."/>
            <person name="Pfiffner J."/>
            <person name="Priest M."/>
            <person name="Russ C."/>
            <person name="Smialowska A."/>
            <person name="Swoboda P."/>
            <person name="Sykes S.M."/>
            <person name="Vaughn M."/>
            <person name="Vengrova S."/>
            <person name="Yoder R."/>
            <person name="Zeng Q."/>
            <person name="Allshire R."/>
            <person name="Baulcombe D."/>
            <person name="Birren B.W."/>
            <person name="Brown W."/>
            <person name="Ekwall K."/>
            <person name="Kellis M."/>
            <person name="Leatherwood J."/>
            <person name="Levin H."/>
            <person name="Margalit H."/>
            <person name="Martienssen R."/>
            <person name="Nieduszynski C.A."/>
            <person name="Spatafora J.W."/>
            <person name="Friedman N."/>
            <person name="Dalgaard J.Z."/>
            <person name="Baumann P."/>
            <person name="Niki H."/>
            <person name="Regev A."/>
            <person name="Nusbaum C."/>
        </authorList>
    </citation>
    <scope>REVISION OF GENE MODEL</scope>
</reference>
<proteinExistence type="inferred from homology"/>